<comment type="subunit">
    <text evidence="1">Component of the small ribosomal subunit. Mature ribosomes consist of a small (40S) and a large (60S) subunit. The 40S subunit contains about 33 different proteins and 1 molecule of RNA (18S). The 60S subunit contains about 49 different proteins and 3 molecules of RNA (25S, 5.8S and 5S).</text>
</comment>
<comment type="subcellular location">
    <subcellularLocation>
        <location evidence="1">Cytoplasm</location>
    </subcellularLocation>
</comment>
<comment type="similarity">
    <text evidence="1">Belongs to the eukaryotic ribosomal protein eS1 family.</text>
</comment>
<evidence type="ECO:0000255" key="1">
    <source>
        <dbReference type="HAMAP-Rule" id="MF_03122"/>
    </source>
</evidence>
<evidence type="ECO:0000305" key="2"/>
<organism>
    <name type="scientific">Theileria parva</name>
    <name type="common">East coast fever infection agent</name>
    <dbReference type="NCBI Taxonomy" id="5875"/>
    <lineage>
        <taxon>Eukaryota</taxon>
        <taxon>Sar</taxon>
        <taxon>Alveolata</taxon>
        <taxon>Apicomplexa</taxon>
        <taxon>Aconoidasida</taxon>
        <taxon>Piroplasmida</taxon>
        <taxon>Theileriidae</taxon>
        <taxon>Theileria</taxon>
    </lineage>
</organism>
<proteinExistence type="inferred from homology"/>
<accession>Q4MYZ4</accession>
<feature type="initiator methionine" description="Removed" evidence="1">
    <location>
        <position position="1"/>
    </location>
</feature>
<feature type="chain" id="PRO_0000389342" description="Small ribosomal subunit protein eS1">
    <location>
        <begin position="2"/>
        <end position="262"/>
    </location>
</feature>
<dbReference type="EMBL" id="AAGK01000006">
    <property type="protein sequence ID" value="EAN30538.1"/>
    <property type="molecule type" value="Genomic_DNA"/>
</dbReference>
<dbReference type="RefSeq" id="XP_762821.1">
    <property type="nucleotide sequence ID" value="XM_757728.1"/>
</dbReference>
<dbReference type="SMR" id="Q4MYZ4"/>
<dbReference type="FunCoup" id="Q4MYZ4">
    <property type="interactions" value="324"/>
</dbReference>
<dbReference type="STRING" id="5875.Q4MYZ4"/>
<dbReference type="EnsemblProtists" id="EAN30538">
    <property type="protein sequence ID" value="EAN30538"/>
    <property type="gene ID" value="TP03_0697"/>
</dbReference>
<dbReference type="GeneID" id="3499627"/>
<dbReference type="KEGG" id="tpv:TP03_0697"/>
<dbReference type="VEuPathDB" id="PiroplasmaDB:TpMuguga_03g00697"/>
<dbReference type="eggNOG" id="KOG1628">
    <property type="taxonomic scope" value="Eukaryota"/>
</dbReference>
<dbReference type="InParanoid" id="Q4MYZ4"/>
<dbReference type="OMA" id="TRFKGHE"/>
<dbReference type="Proteomes" id="UP000001949">
    <property type="component" value="Unassembled WGS sequence"/>
</dbReference>
<dbReference type="GO" id="GO:0022627">
    <property type="term" value="C:cytosolic small ribosomal subunit"/>
    <property type="evidence" value="ECO:0007669"/>
    <property type="project" value="UniProtKB-UniRule"/>
</dbReference>
<dbReference type="GO" id="GO:0003735">
    <property type="term" value="F:structural constituent of ribosome"/>
    <property type="evidence" value="ECO:0007669"/>
    <property type="project" value="UniProtKB-UniRule"/>
</dbReference>
<dbReference type="GO" id="GO:0006412">
    <property type="term" value="P:translation"/>
    <property type="evidence" value="ECO:0007669"/>
    <property type="project" value="UniProtKB-UniRule"/>
</dbReference>
<dbReference type="HAMAP" id="MF_03122">
    <property type="entry name" value="Ribosomal_eS1_euk"/>
    <property type="match status" value="1"/>
</dbReference>
<dbReference type="InterPro" id="IPR001593">
    <property type="entry name" value="Ribosomal_eS1"/>
</dbReference>
<dbReference type="InterPro" id="IPR018281">
    <property type="entry name" value="Ribosomal_eS1_CS"/>
</dbReference>
<dbReference type="InterPro" id="IPR027500">
    <property type="entry name" value="Ribosomal_eS1_euk"/>
</dbReference>
<dbReference type="PANTHER" id="PTHR11830">
    <property type="entry name" value="40S RIBOSOMAL PROTEIN S3A"/>
    <property type="match status" value="1"/>
</dbReference>
<dbReference type="Pfam" id="PF01015">
    <property type="entry name" value="Ribosomal_S3Ae"/>
    <property type="match status" value="1"/>
</dbReference>
<dbReference type="SMART" id="SM01397">
    <property type="entry name" value="Ribosomal_S3Ae"/>
    <property type="match status" value="1"/>
</dbReference>
<dbReference type="PROSITE" id="PS01191">
    <property type="entry name" value="RIBOSOMAL_S3AE"/>
    <property type="match status" value="1"/>
</dbReference>
<sequence>MAVGKNKRVSKGKKGAKKKVIDPFSRKEWYNLKAPVTFNVRNFGQTLVTKTVGTKLATDGLKGRVFEMSLADLNADEDQAYRKIKLSCEDVQGRNCLTDFHGTSVTRDKLCSLIRKNYSLIEAFADVKTLDGYNLRLFCVGYTKRRPGQLKSTCYVRTSKVRLIHKKMVSVMTNEASNSTLKELVKKVIPESIGKEIEKACKSIFPLQNVLVRKIKVLKKPKFDLTKLMESHNYSGDEEGRTLKVKESENATNLLTAELQSS</sequence>
<name>RS3A_THEPA</name>
<reference key="1">
    <citation type="journal article" date="2005" name="Science">
        <title>Genome sequence of Theileria parva, a bovine pathogen that transforms lymphocytes.</title>
        <authorList>
            <person name="Gardner M.J."/>
            <person name="Bishop R."/>
            <person name="Shah T."/>
            <person name="de Villiers E.P."/>
            <person name="Carlton J.M."/>
            <person name="Hall N."/>
            <person name="Ren Q."/>
            <person name="Paulsen I.T."/>
            <person name="Pain A."/>
            <person name="Berriman M."/>
            <person name="Wilson R.J.M."/>
            <person name="Sato S."/>
            <person name="Ralph S.A."/>
            <person name="Mann D.J."/>
            <person name="Xiong Z."/>
            <person name="Shallom S.J."/>
            <person name="Weidman J."/>
            <person name="Jiang L."/>
            <person name="Lynn J."/>
            <person name="Weaver B."/>
            <person name="Shoaibi A."/>
            <person name="Domingo A.R."/>
            <person name="Wasawo D."/>
            <person name="Crabtree J."/>
            <person name="Wortman J.R."/>
            <person name="Haas B."/>
            <person name="Angiuoli S.V."/>
            <person name="Creasy T.H."/>
            <person name="Lu C."/>
            <person name="Suh B."/>
            <person name="Silva J.C."/>
            <person name="Utterback T.R."/>
            <person name="Feldblyum T.V."/>
            <person name="Pertea M."/>
            <person name="Allen J."/>
            <person name="Nierman W.C."/>
            <person name="Taracha E.L.N."/>
            <person name="Salzberg S.L."/>
            <person name="White O.R."/>
            <person name="Fitzhugh H.A."/>
            <person name="Morzaria S."/>
            <person name="Venter J.C."/>
            <person name="Fraser C.M."/>
            <person name="Nene V."/>
        </authorList>
    </citation>
    <scope>NUCLEOTIDE SEQUENCE [LARGE SCALE GENOMIC DNA]</scope>
    <source>
        <strain>Muguga</strain>
    </source>
</reference>
<keyword id="KW-0963">Cytoplasm</keyword>
<keyword id="KW-1185">Reference proteome</keyword>
<keyword id="KW-0687">Ribonucleoprotein</keyword>
<keyword id="KW-0689">Ribosomal protein</keyword>
<protein>
    <recommendedName>
        <fullName evidence="1">Small ribosomal subunit protein eS1</fullName>
    </recommendedName>
    <alternativeName>
        <fullName evidence="2">40S ribosomal protein S3a</fullName>
    </alternativeName>
</protein>
<gene>
    <name type="ordered locus">TP03_0697</name>
</gene>